<keyword id="KW-0998">Cell outer membrane</keyword>
<keyword id="KW-0961">Cell wall biogenesis/degradation</keyword>
<keyword id="KW-0456">Lyase</keyword>
<keyword id="KW-0472">Membrane</keyword>
<keyword id="KW-1185">Reference proteome</keyword>
<keyword id="KW-0732">Signal</keyword>
<sequence>MKKLKINYLFIGILALLLAVALWPSIPWFGKADNRIAAIQARGELRVSTIHTPLTYNEINGKPFGLDYELAKQFADYLGVKLKVTVRQNISQLFDDLDNGNADLLAAGLVYNSERVKNYQPGPTYYSVSQQLVYKVSQYRPRTLGNLTAEQLTVAPGHVVVNDLQTLKDTKFPELSWKVDDKKGSAELMEDVIEGKLDYTIADSVAISLFQRVHPELAVALDITDEQPVTWFSPLDGDNTLSAALLDFFNEMNEDGTLARIEEKYLGHGDDFDYVDTRTFLRAVDAVLPQLKPLFEKYAEEIDWRLLAAIAYQESHWDAQATSPTGVRGMMMLTKNTAQSLGITDRTDAEQSISGGVRYLQDMMSKVPESVPENERIWFALAAYNMGYAHMLDARALTAKTKGNPDSWADVKQCLPLLSQKPYYSKLTYGYARGHEAYAYVENIRKYQISLVGYLQEKEKQATEAAMQLAQDYPAVSPTELGKEKFPFLSFLSQSSSNYLTHSPSLLFSRKGSEEKQN</sequence>
<comment type="function">
    <text evidence="1">Murein-degrading enzyme that degrades murein glycan strands and insoluble, high-molecular weight murein sacculi, with the concomitant formation of a 1,6-anhydromuramoyl product. Lytic transglycosylases (LTs) play an integral role in the metabolism of the peptidoglycan (PG) sacculus. Their lytic action creates space within the PG sacculus to allow for its expansion as well as for the insertion of various structures such as secretion systems and flagella.</text>
</comment>
<comment type="catalytic activity">
    <reaction evidence="1">
        <text>Exolytic cleavage of the (1-&gt;4)-beta-glycosidic linkage between N-acetylmuramic acid (MurNAc) and N-acetylglucosamine (GlcNAc) residues in peptidoglycan, from either the reducing or the non-reducing ends of the peptidoglycan chains, with concomitant formation of a 1,6-anhydrobond in the MurNAc residue.</text>
        <dbReference type="EC" id="4.2.2.n1"/>
    </reaction>
</comment>
<comment type="subcellular location">
    <subcellularLocation>
        <location>Cell outer membrane</location>
        <topology>Peripheral membrane protein</topology>
    </subcellularLocation>
    <text evidence="1">Attached to the inner leaflet of the outer membrane.</text>
</comment>
<comment type="domain">
    <text evidence="1">The N-terminal domain does not have lytic activity and probably modulates enzymatic activity. The C-terminal domain is the catalytic active domain.</text>
</comment>
<comment type="similarity">
    <text evidence="1">In the N-terminal section; belongs to the bacterial solute-binding protein 3 family.</text>
</comment>
<comment type="similarity">
    <text evidence="1">In the C-terminal section; belongs to the transglycosylase Slt family.</text>
</comment>
<comment type="sequence caution" evidence="2">
    <conflict type="erroneous initiation">
        <sequence resource="EMBL-CDS" id="AAZ89265"/>
    </conflict>
</comment>
<reference key="1">
    <citation type="journal article" date="2005" name="Nucleic Acids Res.">
        <title>Genome dynamics and diversity of Shigella species, the etiologic agents of bacillary dysentery.</title>
        <authorList>
            <person name="Yang F."/>
            <person name="Yang J."/>
            <person name="Zhang X."/>
            <person name="Chen L."/>
            <person name="Jiang Y."/>
            <person name="Yan Y."/>
            <person name="Tang X."/>
            <person name="Wang J."/>
            <person name="Xiong Z."/>
            <person name="Dong J."/>
            <person name="Xue Y."/>
            <person name="Zhu Y."/>
            <person name="Xu X."/>
            <person name="Sun L."/>
            <person name="Chen S."/>
            <person name="Nie H."/>
            <person name="Peng J."/>
            <person name="Xu J."/>
            <person name="Wang Y."/>
            <person name="Yuan Z."/>
            <person name="Wen Y."/>
            <person name="Yao Z."/>
            <person name="Shen Y."/>
            <person name="Qiang B."/>
            <person name="Hou Y."/>
            <person name="Yu J."/>
            <person name="Jin Q."/>
        </authorList>
    </citation>
    <scope>NUCLEOTIDE SEQUENCE [LARGE SCALE GENOMIC DNA]</scope>
    <source>
        <strain>Ss046</strain>
    </source>
</reference>
<protein>
    <recommendedName>
        <fullName evidence="1">Membrane-bound lytic murein transglycosylase F</fullName>
        <ecNumber evidence="1">4.2.2.n1</ecNumber>
    </recommendedName>
    <alternativeName>
        <fullName evidence="1">Murein lyase F</fullName>
    </alternativeName>
</protein>
<gene>
    <name evidence="1" type="primary">mltF</name>
    <name type="ordered locus">SSON_2641</name>
</gene>
<evidence type="ECO:0000255" key="1">
    <source>
        <dbReference type="HAMAP-Rule" id="MF_02016"/>
    </source>
</evidence>
<evidence type="ECO:0000305" key="2"/>
<proteinExistence type="inferred from homology"/>
<organism>
    <name type="scientific">Shigella sonnei (strain Ss046)</name>
    <dbReference type="NCBI Taxonomy" id="300269"/>
    <lineage>
        <taxon>Bacteria</taxon>
        <taxon>Pseudomonadati</taxon>
        <taxon>Pseudomonadota</taxon>
        <taxon>Gammaproteobacteria</taxon>
        <taxon>Enterobacterales</taxon>
        <taxon>Enterobacteriaceae</taxon>
        <taxon>Shigella</taxon>
    </lineage>
</organism>
<name>MLTF_SHISS</name>
<accession>Q3YYZ7</accession>
<feature type="signal peptide" evidence="1">
    <location>
        <begin position="1"/>
        <end position="21"/>
    </location>
</feature>
<feature type="chain" id="PRO_0000353986" description="Membrane-bound lytic murein transglycosylase F">
    <location>
        <begin position="22"/>
        <end position="518"/>
    </location>
</feature>
<feature type="region of interest" description="Non-LT domain" evidence="1">
    <location>
        <begin position="22"/>
        <end position="269"/>
    </location>
</feature>
<feature type="region of interest" description="LT domain" evidence="1">
    <location>
        <begin position="270"/>
        <end position="518"/>
    </location>
</feature>
<feature type="active site" evidence="1">
    <location>
        <position position="314"/>
    </location>
</feature>
<dbReference type="EC" id="4.2.2.n1" evidence="1"/>
<dbReference type="EMBL" id="CP000038">
    <property type="protein sequence ID" value="AAZ89265.1"/>
    <property type="status" value="ALT_INIT"/>
    <property type="molecule type" value="Genomic_DNA"/>
</dbReference>
<dbReference type="RefSeq" id="WP_000734223.1">
    <property type="nucleotide sequence ID" value="NC_007384.1"/>
</dbReference>
<dbReference type="SMR" id="Q3YYZ7"/>
<dbReference type="CAZy" id="GH23">
    <property type="family name" value="Glycoside Hydrolase Family 23"/>
</dbReference>
<dbReference type="KEGG" id="ssn:SSON_2641"/>
<dbReference type="HOGENOM" id="CLU_027494_0_1_6"/>
<dbReference type="Proteomes" id="UP000002529">
    <property type="component" value="Chromosome"/>
</dbReference>
<dbReference type="GO" id="GO:0009279">
    <property type="term" value="C:cell outer membrane"/>
    <property type="evidence" value="ECO:0007669"/>
    <property type="project" value="UniProtKB-SubCell"/>
</dbReference>
<dbReference type="GO" id="GO:0008933">
    <property type="term" value="F:peptidoglycan lytic transglycosylase activity"/>
    <property type="evidence" value="ECO:0007669"/>
    <property type="project" value="UniProtKB-UniRule"/>
</dbReference>
<dbReference type="GO" id="GO:0016998">
    <property type="term" value="P:cell wall macromolecule catabolic process"/>
    <property type="evidence" value="ECO:0007669"/>
    <property type="project" value="UniProtKB-UniRule"/>
</dbReference>
<dbReference type="GO" id="GO:0071555">
    <property type="term" value="P:cell wall organization"/>
    <property type="evidence" value="ECO:0007669"/>
    <property type="project" value="UniProtKB-KW"/>
</dbReference>
<dbReference type="GO" id="GO:0009253">
    <property type="term" value="P:peptidoglycan catabolic process"/>
    <property type="evidence" value="ECO:0007669"/>
    <property type="project" value="TreeGrafter"/>
</dbReference>
<dbReference type="CDD" id="cd13403">
    <property type="entry name" value="MLTF-like"/>
    <property type="match status" value="1"/>
</dbReference>
<dbReference type="CDD" id="cd01009">
    <property type="entry name" value="PBP2_YfhD_N"/>
    <property type="match status" value="1"/>
</dbReference>
<dbReference type="FunFam" id="1.10.530.10:FF:000003">
    <property type="entry name" value="Membrane-bound lytic murein transglycosylase F"/>
    <property type="match status" value="1"/>
</dbReference>
<dbReference type="FunFam" id="3.40.190.10:FF:000051">
    <property type="entry name" value="Membrane-bound lytic murein transglycosylase F"/>
    <property type="match status" value="1"/>
</dbReference>
<dbReference type="Gene3D" id="1.10.530.10">
    <property type="match status" value="1"/>
</dbReference>
<dbReference type="Gene3D" id="3.40.190.10">
    <property type="entry name" value="Periplasmic binding protein-like II"/>
    <property type="match status" value="2"/>
</dbReference>
<dbReference type="HAMAP" id="MF_02016">
    <property type="entry name" value="MltF"/>
    <property type="match status" value="1"/>
</dbReference>
<dbReference type="InterPro" id="IPR023346">
    <property type="entry name" value="Lysozyme-like_dom_sf"/>
</dbReference>
<dbReference type="InterPro" id="IPR023703">
    <property type="entry name" value="MltF"/>
</dbReference>
<dbReference type="InterPro" id="IPR001638">
    <property type="entry name" value="Solute-binding_3/MltF_N"/>
</dbReference>
<dbReference type="InterPro" id="IPR000189">
    <property type="entry name" value="Transglyc_AS"/>
</dbReference>
<dbReference type="InterPro" id="IPR008258">
    <property type="entry name" value="Transglycosylase_SLT_dom_1"/>
</dbReference>
<dbReference type="NCBIfam" id="NF008112">
    <property type="entry name" value="PRK10859.1"/>
    <property type="match status" value="1"/>
</dbReference>
<dbReference type="PANTHER" id="PTHR35936">
    <property type="entry name" value="MEMBRANE-BOUND LYTIC MUREIN TRANSGLYCOSYLASE F"/>
    <property type="match status" value="1"/>
</dbReference>
<dbReference type="PANTHER" id="PTHR35936:SF32">
    <property type="entry name" value="MEMBRANE-BOUND LYTIC MUREIN TRANSGLYCOSYLASE F"/>
    <property type="match status" value="1"/>
</dbReference>
<dbReference type="Pfam" id="PF00497">
    <property type="entry name" value="SBP_bac_3"/>
    <property type="match status" value="1"/>
</dbReference>
<dbReference type="Pfam" id="PF01464">
    <property type="entry name" value="SLT"/>
    <property type="match status" value="1"/>
</dbReference>
<dbReference type="SMART" id="SM00062">
    <property type="entry name" value="PBPb"/>
    <property type="match status" value="1"/>
</dbReference>
<dbReference type="SUPFAM" id="SSF53955">
    <property type="entry name" value="Lysozyme-like"/>
    <property type="match status" value="1"/>
</dbReference>
<dbReference type="SUPFAM" id="SSF53850">
    <property type="entry name" value="Periplasmic binding protein-like II"/>
    <property type="match status" value="1"/>
</dbReference>
<dbReference type="PROSITE" id="PS00922">
    <property type="entry name" value="TRANSGLYCOSYLASE"/>
    <property type="match status" value="1"/>
</dbReference>